<gene>
    <name type="primary">ansB</name>
    <name type="ordered locus">PP_2453</name>
</gene>
<sequence length="362" mass="38608">MNAALKTFAPSALALLLILPSSASAKEAETQQKLANVVILATGGTIAGAGASAANSATYQAAKLGVDKLIAGVPELADIANVRGEQVMQIASESISNDDLLKLGKRVAELAESKDVDGIVITHGTDTLEETAFFLNLVEKTDKPIVVVGSMRPGTAMSADGMLNLYNAVAVASDKQSRGKGVLVTMNDEIQSGRDVSKAVNIKTEAFKSAWGPMGMVVEGKSYWFRLPAKRHTVNSEFDIKQISSLPQVDIAYGYGNVTDTAYKALAQNGAKALIHAGTGNGSVSSRVVPALQELRKNGVQIIRSSHVNQGGFVLRNAEQPDDKNDWVVAHDLNPQKARILAMVAMTKTQDSKELQRIFWEY</sequence>
<organism>
    <name type="scientific">Pseudomonas putida (strain ATCC 47054 / DSM 6125 / CFBP 8728 / NCIMB 11950 / KT2440)</name>
    <dbReference type="NCBI Taxonomy" id="160488"/>
    <lineage>
        <taxon>Bacteria</taxon>
        <taxon>Pseudomonadati</taxon>
        <taxon>Pseudomonadota</taxon>
        <taxon>Gammaproteobacteria</taxon>
        <taxon>Pseudomonadales</taxon>
        <taxon>Pseudomonadaceae</taxon>
        <taxon>Pseudomonas</taxon>
    </lineage>
</organism>
<accession>Q88K39</accession>
<evidence type="ECO:0000250" key="1"/>
<evidence type="ECO:0000255" key="2"/>
<evidence type="ECO:0000255" key="3">
    <source>
        <dbReference type="PROSITE-ProRule" id="PRU01068"/>
    </source>
</evidence>
<evidence type="ECO:0000255" key="4">
    <source>
        <dbReference type="PROSITE-ProRule" id="PRU10099"/>
    </source>
</evidence>
<evidence type="ECO:0000255" key="5">
    <source>
        <dbReference type="PROSITE-ProRule" id="PRU10100"/>
    </source>
</evidence>
<evidence type="ECO:0000305" key="6"/>
<evidence type="ECO:0007829" key="7">
    <source>
        <dbReference type="PDB" id="6WYY"/>
    </source>
</evidence>
<evidence type="ECO:0007829" key="8">
    <source>
        <dbReference type="PDB" id="6WZ6"/>
    </source>
</evidence>
<protein>
    <recommendedName>
        <fullName>Glutaminase-asparaginase</fullName>
        <ecNumber>3.5.1.38</ecNumber>
    </recommendedName>
    <alternativeName>
        <fullName>L-ASNase/L-GLNase</fullName>
    </alternativeName>
    <alternativeName>
        <fullName>L-asparagine/L-glutamine amidohydrolase</fullName>
    </alternativeName>
</protein>
<feature type="signal peptide" evidence="2">
    <location>
        <begin position="1"/>
        <end position="25"/>
    </location>
</feature>
<feature type="chain" id="PRO_0000002361" description="Glutaminase-asparaginase">
    <location>
        <begin position="26"/>
        <end position="362"/>
    </location>
</feature>
<feature type="domain" description="Asparaginase/glutaminase" evidence="3">
    <location>
        <begin position="35"/>
        <end position="362"/>
    </location>
</feature>
<feature type="active site" description="Acyl-ester intermediate" evidence="4 5">
    <location>
        <position position="45"/>
    </location>
</feature>
<feature type="binding site" evidence="1">
    <location>
        <position position="92"/>
    </location>
    <ligand>
        <name>substrate</name>
    </ligand>
</feature>
<feature type="binding site" evidence="1">
    <location>
        <begin position="125"/>
        <end position="126"/>
    </location>
    <ligand>
        <name>substrate</name>
    </ligand>
</feature>
<feature type="strand" evidence="8">
    <location>
        <begin position="36"/>
        <end position="44"/>
    </location>
</feature>
<feature type="helix" evidence="8">
    <location>
        <begin position="45"/>
        <end position="47"/>
    </location>
</feature>
<feature type="strand" evidence="8">
    <location>
        <begin position="56"/>
        <end position="58"/>
    </location>
</feature>
<feature type="strand" evidence="8">
    <location>
        <begin position="60"/>
        <end position="62"/>
    </location>
</feature>
<feature type="helix" evidence="8">
    <location>
        <begin position="66"/>
        <end position="71"/>
    </location>
</feature>
<feature type="helix" evidence="8">
    <location>
        <begin position="74"/>
        <end position="78"/>
    </location>
</feature>
<feature type="strand" evidence="8">
    <location>
        <begin position="81"/>
        <end position="90"/>
    </location>
</feature>
<feature type="helix" evidence="8">
    <location>
        <begin position="92"/>
        <end position="94"/>
    </location>
</feature>
<feature type="helix" evidence="8">
    <location>
        <begin position="97"/>
        <end position="111"/>
    </location>
</feature>
<feature type="strand" evidence="8">
    <location>
        <begin position="117"/>
        <end position="122"/>
    </location>
</feature>
<feature type="strand" evidence="7">
    <location>
        <begin position="125"/>
        <end position="127"/>
    </location>
</feature>
<feature type="helix" evidence="8">
    <location>
        <begin position="128"/>
        <end position="138"/>
    </location>
</feature>
<feature type="strand" evidence="8">
    <location>
        <begin position="145"/>
        <end position="148"/>
    </location>
</feature>
<feature type="helix" evidence="8">
    <location>
        <begin position="161"/>
        <end position="172"/>
    </location>
</feature>
<feature type="helix" evidence="8">
    <location>
        <begin position="175"/>
        <end position="177"/>
    </location>
</feature>
<feature type="strand" evidence="7">
    <location>
        <begin position="182"/>
        <end position="184"/>
    </location>
</feature>
<feature type="strand" evidence="8">
    <location>
        <begin position="189"/>
        <end position="192"/>
    </location>
</feature>
<feature type="turn" evidence="8">
    <location>
        <begin position="193"/>
        <end position="195"/>
    </location>
</feature>
<feature type="strand" evidence="8">
    <location>
        <begin position="200"/>
        <end position="203"/>
    </location>
</feature>
<feature type="strand" evidence="8">
    <location>
        <begin position="214"/>
        <end position="218"/>
    </location>
</feature>
<feature type="strand" evidence="8">
    <location>
        <begin position="221"/>
        <end position="224"/>
    </location>
</feature>
<feature type="strand" evidence="8">
    <location>
        <begin position="226"/>
        <end position="228"/>
    </location>
</feature>
<feature type="helix" evidence="8">
    <location>
        <begin position="233"/>
        <end position="235"/>
    </location>
</feature>
<feature type="helix" evidence="8">
    <location>
        <begin position="240"/>
        <end position="242"/>
    </location>
</feature>
<feature type="strand" evidence="8">
    <location>
        <begin position="249"/>
        <end position="253"/>
    </location>
</feature>
<feature type="helix" evidence="8">
    <location>
        <begin position="261"/>
        <end position="268"/>
    </location>
</feature>
<feature type="strand" evidence="8">
    <location>
        <begin position="272"/>
        <end position="279"/>
    </location>
</feature>
<feature type="turn" evidence="8">
    <location>
        <begin position="280"/>
        <end position="282"/>
    </location>
</feature>
<feature type="turn" evidence="8">
    <location>
        <begin position="286"/>
        <end position="288"/>
    </location>
</feature>
<feature type="helix" evidence="8">
    <location>
        <begin position="289"/>
        <end position="297"/>
    </location>
</feature>
<feature type="strand" evidence="8">
    <location>
        <begin position="301"/>
        <end position="307"/>
    </location>
</feature>
<feature type="turn" evidence="8">
    <location>
        <begin position="316"/>
        <end position="318"/>
    </location>
</feature>
<feature type="helix" evidence="8">
    <location>
        <begin position="322"/>
        <end position="325"/>
    </location>
</feature>
<feature type="helix" evidence="8">
    <location>
        <begin position="335"/>
        <end position="345"/>
    </location>
</feature>
<feature type="turn" evidence="8">
    <location>
        <begin position="346"/>
        <end position="348"/>
    </location>
</feature>
<feature type="helix" evidence="8">
    <location>
        <begin position="352"/>
        <end position="361"/>
    </location>
</feature>
<name>ASPQ_PSEPK</name>
<reference key="1">
    <citation type="journal article" date="2002" name="Environ. Microbiol.">
        <title>Complete genome sequence and comparative analysis of the metabolically versatile Pseudomonas putida KT2440.</title>
        <authorList>
            <person name="Nelson K.E."/>
            <person name="Weinel C."/>
            <person name="Paulsen I.T."/>
            <person name="Dodson R.J."/>
            <person name="Hilbert H."/>
            <person name="Martins dos Santos V.A.P."/>
            <person name="Fouts D.E."/>
            <person name="Gill S.R."/>
            <person name="Pop M."/>
            <person name="Holmes M."/>
            <person name="Brinkac L.M."/>
            <person name="Beanan M.J."/>
            <person name="DeBoy R.T."/>
            <person name="Daugherty S.C."/>
            <person name="Kolonay J.F."/>
            <person name="Madupu R."/>
            <person name="Nelson W.C."/>
            <person name="White O."/>
            <person name="Peterson J.D."/>
            <person name="Khouri H.M."/>
            <person name="Hance I."/>
            <person name="Chris Lee P."/>
            <person name="Holtzapple E.K."/>
            <person name="Scanlan D."/>
            <person name="Tran K."/>
            <person name="Moazzez A."/>
            <person name="Utterback T.R."/>
            <person name="Rizzo M."/>
            <person name="Lee K."/>
            <person name="Kosack D."/>
            <person name="Moestl D."/>
            <person name="Wedler H."/>
            <person name="Lauber J."/>
            <person name="Stjepandic D."/>
            <person name="Hoheisel J."/>
            <person name="Straetz M."/>
            <person name="Heim S."/>
            <person name="Kiewitz C."/>
            <person name="Eisen J.A."/>
            <person name="Timmis K.N."/>
            <person name="Duesterhoeft A."/>
            <person name="Tuemmler B."/>
            <person name="Fraser C.M."/>
        </authorList>
    </citation>
    <scope>NUCLEOTIDE SEQUENCE [LARGE SCALE GENOMIC DNA]</scope>
    <source>
        <strain>ATCC 47054 / DSM 6125 / CFBP 8728 / NCIMB 11950 / KT2440</strain>
    </source>
</reference>
<comment type="catalytic activity">
    <reaction>
        <text>L-glutamine + H2O = L-glutamate + NH4(+)</text>
        <dbReference type="Rhea" id="RHEA:15889"/>
        <dbReference type="ChEBI" id="CHEBI:15377"/>
        <dbReference type="ChEBI" id="CHEBI:28938"/>
        <dbReference type="ChEBI" id="CHEBI:29985"/>
        <dbReference type="ChEBI" id="CHEBI:58359"/>
        <dbReference type="EC" id="3.5.1.38"/>
    </reaction>
</comment>
<comment type="catalytic activity">
    <reaction>
        <text>L-asparagine + H2O = L-aspartate + NH4(+)</text>
        <dbReference type="Rhea" id="RHEA:21016"/>
        <dbReference type="ChEBI" id="CHEBI:15377"/>
        <dbReference type="ChEBI" id="CHEBI:28938"/>
        <dbReference type="ChEBI" id="CHEBI:29991"/>
        <dbReference type="ChEBI" id="CHEBI:58048"/>
        <dbReference type="EC" id="3.5.1.38"/>
    </reaction>
</comment>
<comment type="subunit">
    <text evidence="1">Homotetramer.</text>
</comment>
<comment type="subcellular location">
    <subcellularLocation>
        <location evidence="1">Periplasm</location>
    </subcellularLocation>
</comment>
<comment type="similarity">
    <text evidence="6">Belongs to the asparaginase 1 family.</text>
</comment>
<keyword id="KW-0002">3D-structure</keyword>
<keyword id="KW-0378">Hydrolase</keyword>
<keyword id="KW-0574">Periplasm</keyword>
<keyword id="KW-1185">Reference proteome</keyword>
<keyword id="KW-0732">Signal</keyword>
<proteinExistence type="evidence at protein level"/>
<dbReference type="EC" id="3.5.1.38"/>
<dbReference type="EMBL" id="AE015451">
    <property type="protein sequence ID" value="AAN68065.1"/>
    <property type="molecule type" value="Genomic_DNA"/>
</dbReference>
<dbReference type="RefSeq" id="NP_744601.1">
    <property type="nucleotide sequence ID" value="NC_002947.4"/>
</dbReference>
<dbReference type="RefSeq" id="WP_010953400.1">
    <property type="nucleotide sequence ID" value="NZ_CP169744.1"/>
</dbReference>
<dbReference type="PDB" id="6WYW">
    <property type="method" value="X-ray"/>
    <property type="resolution" value="2.13 A"/>
    <property type="chains" value="A/B/C/D=26-362"/>
</dbReference>
<dbReference type="PDB" id="6WYX">
    <property type="method" value="X-ray"/>
    <property type="resolution" value="1.48 A"/>
    <property type="chains" value="A/B/C/D=26-362"/>
</dbReference>
<dbReference type="PDB" id="6WYY">
    <property type="method" value="X-ray"/>
    <property type="resolution" value="1.35 A"/>
    <property type="chains" value="A/B/C/D=26-362"/>
</dbReference>
<dbReference type="PDB" id="6WYZ">
    <property type="method" value="X-ray"/>
    <property type="resolution" value="1.70 A"/>
    <property type="chains" value="A/B/C/D=26-362"/>
</dbReference>
<dbReference type="PDB" id="6WZ4">
    <property type="method" value="X-ray"/>
    <property type="resolution" value="1.58 A"/>
    <property type="chains" value="A/B/C/D=26-362"/>
</dbReference>
<dbReference type="PDB" id="6WZ6">
    <property type="method" value="X-ray"/>
    <property type="resolution" value="1.15 A"/>
    <property type="chains" value="A/B/C/D=26-362"/>
</dbReference>
<dbReference type="PDB" id="6WZ8">
    <property type="method" value="X-ray"/>
    <property type="resolution" value="1.70 A"/>
    <property type="chains" value="A/B/C/D=26-362"/>
</dbReference>
<dbReference type="PDBsum" id="6WYW"/>
<dbReference type="PDBsum" id="6WYX"/>
<dbReference type="PDBsum" id="6WYY"/>
<dbReference type="PDBsum" id="6WYZ"/>
<dbReference type="PDBsum" id="6WZ4"/>
<dbReference type="PDBsum" id="6WZ6"/>
<dbReference type="PDBsum" id="6WZ8"/>
<dbReference type="SMR" id="Q88K39"/>
<dbReference type="STRING" id="160488.PP_2453"/>
<dbReference type="DrugBank" id="DB04388">
    <property type="generic name" value="4-Carboxy-4-Aminobutanal"/>
</dbReference>
<dbReference type="DrugBank" id="DB02571">
    <property type="generic name" value="Allysine"/>
</dbReference>
<dbReference type="PaxDb" id="160488-PP_2453"/>
<dbReference type="KEGG" id="ppu:PP_2453"/>
<dbReference type="PATRIC" id="fig|160488.4.peg.2599"/>
<dbReference type="eggNOG" id="COG0252">
    <property type="taxonomic scope" value="Bacteria"/>
</dbReference>
<dbReference type="HOGENOM" id="CLU_019134_1_2_6"/>
<dbReference type="OrthoDB" id="9788068at2"/>
<dbReference type="PhylomeDB" id="Q88K39"/>
<dbReference type="BioCyc" id="PPUT160488:G1G01-2623-MONOMER"/>
<dbReference type="Proteomes" id="UP000000556">
    <property type="component" value="Chromosome"/>
</dbReference>
<dbReference type="GO" id="GO:0042597">
    <property type="term" value="C:periplasmic space"/>
    <property type="evidence" value="ECO:0007669"/>
    <property type="project" value="UniProtKB-SubCell"/>
</dbReference>
<dbReference type="GO" id="GO:0004067">
    <property type="term" value="F:asparaginase activity"/>
    <property type="evidence" value="ECO:0007669"/>
    <property type="project" value="InterPro"/>
</dbReference>
<dbReference type="GO" id="GO:0050417">
    <property type="term" value="F:glutamin-(asparagin-)ase activity"/>
    <property type="evidence" value="ECO:0007669"/>
    <property type="project" value="UniProtKB-EC"/>
</dbReference>
<dbReference type="GO" id="GO:0004359">
    <property type="term" value="F:glutaminase activity"/>
    <property type="evidence" value="ECO:0007669"/>
    <property type="project" value="RHEA"/>
</dbReference>
<dbReference type="GO" id="GO:0006528">
    <property type="term" value="P:asparagine metabolic process"/>
    <property type="evidence" value="ECO:0007669"/>
    <property type="project" value="InterPro"/>
</dbReference>
<dbReference type="CDD" id="cd00411">
    <property type="entry name" value="L-asparaginase_like"/>
    <property type="match status" value="1"/>
</dbReference>
<dbReference type="FunFam" id="3.40.50.40:FF:000005">
    <property type="entry name" value="Glutaminase-asparaginase"/>
    <property type="match status" value="1"/>
</dbReference>
<dbReference type="FunFam" id="3.40.50.1170:FF:000001">
    <property type="entry name" value="L-asparaginase 2"/>
    <property type="match status" value="1"/>
</dbReference>
<dbReference type="Gene3D" id="3.40.50.40">
    <property type="match status" value="1"/>
</dbReference>
<dbReference type="Gene3D" id="3.40.50.1170">
    <property type="entry name" value="L-asparaginase, N-terminal domain"/>
    <property type="match status" value="1"/>
</dbReference>
<dbReference type="InterPro" id="IPR004550">
    <property type="entry name" value="AsnASE_II"/>
</dbReference>
<dbReference type="InterPro" id="IPR036152">
    <property type="entry name" value="Asp/glu_Ase-like_sf"/>
</dbReference>
<dbReference type="InterPro" id="IPR006034">
    <property type="entry name" value="Asparaginase/glutaminase-like"/>
</dbReference>
<dbReference type="InterPro" id="IPR020827">
    <property type="entry name" value="Asparaginase/glutaminase_AS1"/>
</dbReference>
<dbReference type="InterPro" id="IPR027475">
    <property type="entry name" value="Asparaginase/glutaminase_AS2"/>
</dbReference>
<dbReference type="InterPro" id="IPR040919">
    <property type="entry name" value="Asparaginase_C"/>
</dbReference>
<dbReference type="InterPro" id="IPR027473">
    <property type="entry name" value="L-asparaginase_C"/>
</dbReference>
<dbReference type="InterPro" id="IPR027474">
    <property type="entry name" value="L-asparaginase_N"/>
</dbReference>
<dbReference type="InterPro" id="IPR037152">
    <property type="entry name" value="L-asparaginase_N_sf"/>
</dbReference>
<dbReference type="NCBIfam" id="TIGR00520">
    <property type="entry name" value="asnASE_II"/>
    <property type="match status" value="1"/>
</dbReference>
<dbReference type="PANTHER" id="PTHR11707:SF28">
    <property type="entry name" value="60 KDA LYSOPHOSPHOLIPASE"/>
    <property type="match status" value="1"/>
</dbReference>
<dbReference type="PANTHER" id="PTHR11707">
    <property type="entry name" value="L-ASPARAGINASE"/>
    <property type="match status" value="1"/>
</dbReference>
<dbReference type="Pfam" id="PF00710">
    <property type="entry name" value="Asparaginase"/>
    <property type="match status" value="1"/>
</dbReference>
<dbReference type="Pfam" id="PF17763">
    <property type="entry name" value="Asparaginase_C"/>
    <property type="match status" value="1"/>
</dbReference>
<dbReference type="PIRSF" id="PIRSF001220">
    <property type="entry name" value="L-ASNase_gatD"/>
    <property type="match status" value="1"/>
</dbReference>
<dbReference type="PIRSF" id="PIRSF500176">
    <property type="entry name" value="L_ASNase"/>
    <property type="match status" value="1"/>
</dbReference>
<dbReference type="PRINTS" id="PR00139">
    <property type="entry name" value="ASNGLNASE"/>
</dbReference>
<dbReference type="SMART" id="SM00870">
    <property type="entry name" value="Asparaginase"/>
    <property type="match status" value="1"/>
</dbReference>
<dbReference type="SUPFAM" id="SSF53774">
    <property type="entry name" value="Glutaminase/Asparaginase"/>
    <property type="match status" value="1"/>
</dbReference>
<dbReference type="PROSITE" id="PS00144">
    <property type="entry name" value="ASN_GLN_ASE_1"/>
    <property type="match status" value="1"/>
</dbReference>
<dbReference type="PROSITE" id="PS00917">
    <property type="entry name" value="ASN_GLN_ASE_2"/>
    <property type="match status" value="1"/>
</dbReference>
<dbReference type="PROSITE" id="PS51732">
    <property type="entry name" value="ASN_GLN_ASE_3"/>
    <property type="match status" value="1"/>
</dbReference>